<evidence type="ECO:0000255" key="1">
    <source>
        <dbReference type="HAMAP-Rule" id="MF_01405"/>
    </source>
</evidence>
<gene>
    <name type="ordered locus">LIC_10549</name>
</gene>
<reference key="1">
    <citation type="journal article" date="2004" name="J. Bacteriol.">
        <title>Comparative genomics of two Leptospira interrogans serovars reveals novel insights into physiology and pathogenesis.</title>
        <authorList>
            <person name="Nascimento A.L.T.O."/>
            <person name="Ko A.I."/>
            <person name="Martins E.A.L."/>
            <person name="Monteiro-Vitorello C.B."/>
            <person name="Ho P.L."/>
            <person name="Haake D.A."/>
            <person name="Verjovski-Almeida S."/>
            <person name="Hartskeerl R.A."/>
            <person name="Marques M.V."/>
            <person name="Oliveira M.C."/>
            <person name="Menck C.F.M."/>
            <person name="Leite L.C.C."/>
            <person name="Carrer H."/>
            <person name="Coutinho L.L."/>
            <person name="Degrave W.M."/>
            <person name="Dellagostin O.A."/>
            <person name="El-Dorry H."/>
            <person name="Ferro E.S."/>
            <person name="Ferro M.I.T."/>
            <person name="Furlan L.R."/>
            <person name="Gamberini M."/>
            <person name="Giglioti E.A."/>
            <person name="Goes-Neto A."/>
            <person name="Goldman G.H."/>
            <person name="Goldman M.H.S."/>
            <person name="Harakava R."/>
            <person name="Jeronimo S.M.B."/>
            <person name="Junqueira-de-Azevedo I.L.M."/>
            <person name="Kimura E.T."/>
            <person name="Kuramae E.E."/>
            <person name="Lemos E.G.M."/>
            <person name="Lemos M.V.F."/>
            <person name="Marino C.L."/>
            <person name="Nunes L.R."/>
            <person name="de Oliveira R.C."/>
            <person name="Pereira G.G."/>
            <person name="Reis M.S."/>
            <person name="Schriefer A."/>
            <person name="Siqueira W.J."/>
            <person name="Sommer P."/>
            <person name="Tsai S.M."/>
            <person name="Simpson A.J.G."/>
            <person name="Ferro J.A."/>
            <person name="Camargo L.E.A."/>
            <person name="Kitajima J.P."/>
            <person name="Setubal J.C."/>
            <person name="Van Sluys M.A."/>
        </authorList>
    </citation>
    <scope>NUCLEOTIDE SEQUENCE [LARGE SCALE GENOMIC DNA]</scope>
    <source>
        <strain>Fiocruz L1-130</strain>
    </source>
</reference>
<accession>Q72UV8</accession>
<comment type="function">
    <text evidence="1">Pyrophosphatase that catalyzes the hydrolysis of nucleoside triphosphates to their monophosphate derivatives, with a high preference for the non-canonical purine nucleotides XTP (xanthosine triphosphate), dITP (deoxyinosine triphosphate) and ITP. Seems to function as a house-cleaning enzyme that removes non-canonical purine nucleotides from the nucleotide pool, thus preventing their incorporation into DNA/RNA and avoiding chromosomal lesions.</text>
</comment>
<comment type="catalytic activity">
    <reaction evidence="1">
        <text>XTP + H2O = XMP + diphosphate + H(+)</text>
        <dbReference type="Rhea" id="RHEA:28610"/>
        <dbReference type="ChEBI" id="CHEBI:15377"/>
        <dbReference type="ChEBI" id="CHEBI:15378"/>
        <dbReference type="ChEBI" id="CHEBI:33019"/>
        <dbReference type="ChEBI" id="CHEBI:57464"/>
        <dbReference type="ChEBI" id="CHEBI:61314"/>
        <dbReference type="EC" id="3.6.1.66"/>
    </reaction>
</comment>
<comment type="catalytic activity">
    <reaction evidence="1">
        <text>dITP + H2O = dIMP + diphosphate + H(+)</text>
        <dbReference type="Rhea" id="RHEA:28342"/>
        <dbReference type="ChEBI" id="CHEBI:15377"/>
        <dbReference type="ChEBI" id="CHEBI:15378"/>
        <dbReference type="ChEBI" id="CHEBI:33019"/>
        <dbReference type="ChEBI" id="CHEBI:61194"/>
        <dbReference type="ChEBI" id="CHEBI:61382"/>
        <dbReference type="EC" id="3.6.1.66"/>
    </reaction>
</comment>
<comment type="catalytic activity">
    <reaction evidence="1">
        <text>ITP + H2O = IMP + diphosphate + H(+)</text>
        <dbReference type="Rhea" id="RHEA:29399"/>
        <dbReference type="ChEBI" id="CHEBI:15377"/>
        <dbReference type="ChEBI" id="CHEBI:15378"/>
        <dbReference type="ChEBI" id="CHEBI:33019"/>
        <dbReference type="ChEBI" id="CHEBI:58053"/>
        <dbReference type="ChEBI" id="CHEBI:61402"/>
        <dbReference type="EC" id="3.6.1.66"/>
    </reaction>
</comment>
<comment type="cofactor">
    <cofactor evidence="1">
        <name>Mg(2+)</name>
        <dbReference type="ChEBI" id="CHEBI:18420"/>
    </cofactor>
    <text evidence="1">Binds 1 Mg(2+) ion per subunit.</text>
</comment>
<comment type="subunit">
    <text evidence="1">Homodimer.</text>
</comment>
<comment type="similarity">
    <text evidence="1">Belongs to the HAM1 NTPase family.</text>
</comment>
<keyword id="KW-0378">Hydrolase</keyword>
<keyword id="KW-0460">Magnesium</keyword>
<keyword id="KW-0479">Metal-binding</keyword>
<keyword id="KW-0546">Nucleotide metabolism</keyword>
<keyword id="KW-0547">Nucleotide-binding</keyword>
<dbReference type="EC" id="3.6.1.66" evidence="1"/>
<dbReference type="EMBL" id="AE016823">
    <property type="protein sequence ID" value="AAS69170.1"/>
    <property type="molecule type" value="Genomic_DNA"/>
</dbReference>
<dbReference type="SMR" id="Q72UV8"/>
<dbReference type="KEGG" id="lic:LIC_10549"/>
<dbReference type="HOGENOM" id="CLU_082080_0_2_12"/>
<dbReference type="Proteomes" id="UP000007037">
    <property type="component" value="Chromosome I"/>
</dbReference>
<dbReference type="GO" id="GO:0005829">
    <property type="term" value="C:cytosol"/>
    <property type="evidence" value="ECO:0007669"/>
    <property type="project" value="TreeGrafter"/>
</dbReference>
<dbReference type="GO" id="GO:0035870">
    <property type="term" value="F:dITP diphosphatase activity"/>
    <property type="evidence" value="ECO:0007669"/>
    <property type="project" value="RHEA"/>
</dbReference>
<dbReference type="GO" id="GO:0036220">
    <property type="term" value="F:ITP diphosphatase activity"/>
    <property type="evidence" value="ECO:0007669"/>
    <property type="project" value="UniProtKB-EC"/>
</dbReference>
<dbReference type="GO" id="GO:0046872">
    <property type="term" value="F:metal ion binding"/>
    <property type="evidence" value="ECO:0007669"/>
    <property type="project" value="UniProtKB-KW"/>
</dbReference>
<dbReference type="GO" id="GO:0000166">
    <property type="term" value="F:nucleotide binding"/>
    <property type="evidence" value="ECO:0007669"/>
    <property type="project" value="UniProtKB-KW"/>
</dbReference>
<dbReference type="GO" id="GO:0017111">
    <property type="term" value="F:ribonucleoside triphosphate phosphatase activity"/>
    <property type="evidence" value="ECO:0007669"/>
    <property type="project" value="InterPro"/>
</dbReference>
<dbReference type="GO" id="GO:0036222">
    <property type="term" value="F:XTP diphosphatase activity"/>
    <property type="evidence" value="ECO:0007669"/>
    <property type="project" value="RHEA"/>
</dbReference>
<dbReference type="GO" id="GO:0009117">
    <property type="term" value="P:nucleotide metabolic process"/>
    <property type="evidence" value="ECO:0007669"/>
    <property type="project" value="UniProtKB-KW"/>
</dbReference>
<dbReference type="GO" id="GO:0009146">
    <property type="term" value="P:purine nucleoside triphosphate catabolic process"/>
    <property type="evidence" value="ECO:0007669"/>
    <property type="project" value="UniProtKB-UniRule"/>
</dbReference>
<dbReference type="CDD" id="cd00515">
    <property type="entry name" value="HAM1"/>
    <property type="match status" value="1"/>
</dbReference>
<dbReference type="FunFam" id="3.90.950.10:FF:000001">
    <property type="entry name" value="dITP/XTP pyrophosphatase"/>
    <property type="match status" value="1"/>
</dbReference>
<dbReference type="Gene3D" id="3.90.950.10">
    <property type="match status" value="1"/>
</dbReference>
<dbReference type="HAMAP" id="MF_01405">
    <property type="entry name" value="Non_canon_purine_NTPase"/>
    <property type="match status" value="1"/>
</dbReference>
<dbReference type="InterPro" id="IPR020922">
    <property type="entry name" value="dITP/XTP_pyrophosphatase"/>
</dbReference>
<dbReference type="InterPro" id="IPR029001">
    <property type="entry name" value="ITPase-like_fam"/>
</dbReference>
<dbReference type="InterPro" id="IPR002637">
    <property type="entry name" value="RdgB/HAM1"/>
</dbReference>
<dbReference type="NCBIfam" id="TIGR00042">
    <property type="entry name" value="RdgB/HAM1 family non-canonical purine NTP pyrophosphatase"/>
    <property type="match status" value="1"/>
</dbReference>
<dbReference type="PANTHER" id="PTHR11067:SF9">
    <property type="entry name" value="INOSINE TRIPHOSPHATE PYROPHOSPHATASE"/>
    <property type="match status" value="1"/>
</dbReference>
<dbReference type="PANTHER" id="PTHR11067">
    <property type="entry name" value="INOSINE TRIPHOSPHATE PYROPHOSPHATASE/HAM1 PROTEIN"/>
    <property type="match status" value="1"/>
</dbReference>
<dbReference type="Pfam" id="PF01725">
    <property type="entry name" value="Ham1p_like"/>
    <property type="match status" value="1"/>
</dbReference>
<dbReference type="SUPFAM" id="SSF52972">
    <property type="entry name" value="ITPase-like"/>
    <property type="match status" value="1"/>
</dbReference>
<proteinExistence type="inferred from homology"/>
<organism>
    <name type="scientific">Leptospira interrogans serogroup Icterohaemorrhagiae serovar copenhageni (strain Fiocruz L1-130)</name>
    <dbReference type="NCBI Taxonomy" id="267671"/>
    <lineage>
        <taxon>Bacteria</taxon>
        <taxon>Pseudomonadati</taxon>
        <taxon>Spirochaetota</taxon>
        <taxon>Spirochaetia</taxon>
        <taxon>Leptospirales</taxon>
        <taxon>Leptospiraceae</taxon>
        <taxon>Leptospira</taxon>
    </lineage>
</organism>
<sequence length="197" mass="22105">MKRQLALGTNNLNKVKEVSSILMELGIQILTPKDLKVSFNPEETGSTFKENALIKAKELFYLTKIPSIADDSGICVSALKDEPGVYSARFGGPELNDEGRALLLLEKLKGNQNRKAYYACAIAYVDESTEQSFEGRCEGLISEEYDRIGIYGFGYDPIFIFPPLQKPFSQIQEETKNSVSHRKKALDELLKFLKTKP</sequence>
<protein>
    <recommendedName>
        <fullName evidence="1">dITP/XTP pyrophosphatase</fullName>
        <ecNumber evidence="1">3.6.1.66</ecNumber>
    </recommendedName>
    <alternativeName>
        <fullName evidence="1">Non-canonical purine NTP pyrophosphatase</fullName>
    </alternativeName>
    <alternativeName>
        <fullName evidence="1">Non-standard purine NTP pyrophosphatase</fullName>
    </alternativeName>
    <alternativeName>
        <fullName evidence="1">Nucleoside-triphosphate diphosphatase</fullName>
    </alternativeName>
    <alternativeName>
        <fullName evidence="1">Nucleoside-triphosphate pyrophosphatase</fullName>
        <shortName evidence="1">NTPase</shortName>
    </alternativeName>
</protein>
<feature type="chain" id="PRO_0000178185" description="dITP/XTP pyrophosphatase">
    <location>
        <begin position="1"/>
        <end position="197"/>
    </location>
</feature>
<feature type="active site" description="Proton acceptor" evidence="1">
    <location>
        <position position="71"/>
    </location>
</feature>
<feature type="binding site" evidence="1">
    <location>
        <begin position="9"/>
        <end position="14"/>
    </location>
    <ligand>
        <name>substrate</name>
    </ligand>
</feature>
<feature type="binding site" evidence="1">
    <location>
        <position position="42"/>
    </location>
    <ligand>
        <name>Mg(2+)</name>
        <dbReference type="ChEBI" id="CHEBI:18420"/>
    </ligand>
</feature>
<feature type="binding site" evidence="1">
    <location>
        <position position="71"/>
    </location>
    <ligand>
        <name>Mg(2+)</name>
        <dbReference type="ChEBI" id="CHEBI:18420"/>
    </ligand>
</feature>
<feature type="binding site" evidence="1">
    <location>
        <position position="72"/>
    </location>
    <ligand>
        <name>substrate</name>
    </ligand>
</feature>
<feature type="binding site" evidence="1">
    <location>
        <begin position="153"/>
        <end position="156"/>
    </location>
    <ligand>
        <name>substrate</name>
    </ligand>
</feature>
<feature type="binding site" evidence="1">
    <location>
        <position position="176"/>
    </location>
    <ligand>
        <name>substrate</name>
    </ligand>
</feature>
<feature type="binding site" evidence="1">
    <location>
        <begin position="181"/>
        <end position="182"/>
    </location>
    <ligand>
        <name>substrate</name>
    </ligand>
</feature>
<name>IXTPA_LEPIC</name>